<organism>
    <name type="scientific">Staphylococcus aureus (strain N315)</name>
    <dbReference type="NCBI Taxonomy" id="158879"/>
    <lineage>
        <taxon>Bacteria</taxon>
        <taxon>Bacillati</taxon>
        <taxon>Bacillota</taxon>
        <taxon>Bacilli</taxon>
        <taxon>Bacillales</taxon>
        <taxon>Staphylococcaceae</taxon>
        <taxon>Staphylococcus</taxon>
    </lineage>
</organism>
<name>NAGB_STAAN</name>
<feature type="chain" id="PRO_0000160164" description="Glucosamine-6-phosphate deaminase">
    <location>
        <begin position="1"/>
        <end position="252"/>
    </location>
</feature>
<feature type="active site" description="Proton acceptor; for enolization step" evidence="1">
    <location>
        <position position="67"/>
    </location>
</feature>
<feature type="active site" description="For ring-opening step" evidence="1">
    <location>
        <position position="137"/>
    </location>
</feature>
<feature type="active site" description="Proton acceptor; for ring-opening step" evidence="1">
    <location>
        <position position="139"/>
    </location>
</feature>
<feature type="active site" description="For ring-opening step" evidence="1">
    <location>
        <position position="144"/>
    </location>
</feature>
<comment type="function">
    <text evidence="1">Catalyzes the reversible isomerization-deamination of glucosamine 6-phosphate (GlcN6P) to form fructose 6-phosphate (Fru6P) and ammonium ion.</text>
</comment>
<comment type="catalytic activity">
    <reaction evidence="1">
        <text>alpha-D-glucosamine 6-phosphate + H2O = beta-D-fructose 6-phosphate + NH4(+)</text>
        <dbReference type="Rhea" id="RHEA:12172"/>
        <dbReference type="ChEBI" id="CHEBI:15377"/>
        <dbReference type="ChEBI" id="CHEBI:28938"/>
        <dbReference type="ChEBI" id="CHEBI:57634"/>
        <dbReference type="ChEBI" id="CHEBI:75989"/>
        <dbReference type="EC" id="3.5.99.6"/>
    </reaction>
</comment>
<comment type="pathway">
    <text evidence="1">Amino-sugar metabolism; N-acetylneuraminate degradation; D-fructose 6-phosphate from N-acetylneuraminate: step 5/5.</text>
</comment>
<comment type="similarity">
    <text evidence="1">Belongs to the glucosamine/galactosamine-6-phosphate isomerase family. NagB subfamily.</text>
</comment>
<sequence length="252" mass="28467">MKVLNLGSKKQASFYVACELYKEMAFNQHCKLGLATGGTMTDLYEQLVKLLNKNQLNVDNVSTFNLDEYVGLTASHPQSYHYYMDDMLFKQYPYFNRKNIHIPNGDADDMNAEASKYNDVLEQQGQRDIQILGIGENGHIGFNEPGTPFDSVTHIVDLTESTIKANSRYFKNEDDVPKQAISMGLANILQAKRIILLAFGEKKRAAITHLLNQEISVDVPATLLHKHPNVEIYLDDEACPKNVAKIHVDEMD</sequence>
<proteinExistence type="evidence at protein level"/>
<protein>
    <recommendedName>
        <fullName evidence="1">Glucosamine-6-phosphate deaminase</fullName>
        <ecNumber evidence="1">3.5.99.6</ecNumber>
    </recommendedName>
    <alternativeName>
        <fullName evidence="1">GlcN6P deaminase</fullName>
        <shortName evidence="1">GNPDA</shortName>
    </alternativeName>
    <alternativeName>
        <fullName evidence="1">Glucosamine-6-phosphate isomerase</fullName>
    </alternativeName>
</protein>
<gene>
    <name evidence="1" type="primary">nagB</name>
    <name type="ordered locus">SA0527</name>
</gene>
<dbReference type="EC" id="3.5.99.6" evidence="1"/>
<dbReference type="EMBL" id="BA000018">
    <property type="protein sequence ID" value="BAB41758.1"/>
    <property type="molecule type" value="Genomic_DNA"/>
</dbReference>
<dbReference type="PIR" id="C89825">
    <property type="entry name" value="C89825"/>
</dbReference>
<dbReference type="RefSeq" id="WP_000866415.1">
    <property type="nucleotide sequence ID" value="NC_002745.2"/>
</dbReference>
<dbReference type="SMR" id="P99125"/>
<dbReference type="EnsemblBacteria" id="BAB41758">
    <property type="protein sequence ID" value="BAB41758"/>
    <property type="gene ID" value="BAB41758"/>
</dbReference>
<dbReference type="KEGG" id="sau:SA0527"/>
<dbReference type="HOGENOM" id="CLU_049611_1_1_9"/>
<dbReference type="UniPathway" id="UPA00629">
    <property type="reaction ID" value="UER00684"/>
</dbReference>
<dbReference type="GO" id="GO:0005737">
    <property type="term" value="C:cytoplasm"/>
    <property type="evidence" value="ECO:0007669"/>
    <property type="project" value="TreeGrafter"/>
</dbReference>
<dbReference type="GO" id="GO:0004342">
    <property type="term" value="F:glucosamine-6-phosphate deaminase activity"/>
    <property type="evidence" value="ECO:0007669"/>
    <property type="project" value="UniProtKB-UniRule"/>
</dbReference>
<dbReference type="GO" id="GO:0042802">
    <property type="term" value="F:identical protein binding"/>
    <property type="evidence" value="ECO:0007669"/>
    <property type="project" value="TreeGrafter"/>
</dbReference>
<dbReference type="GO" id="GO:0005975">
    <property type="term" value="P:carbohydrate metabolic process"/>
    <property type="evidence" value="ECO:0007669"/>
    <property type="project" value="InterPro"/>
</dbReference>
<dbReference type="GO" id="GO:0006043">
    <property type="term" value="P:glucosamine catabolic process"/>
    <property type="evidence" value="ECO:0007669"/>
    <property type="project" value="TreeGrafter"/>
</dbReference>
<dbReference type="GO" id="GO:0006046">
    <property type="term" value="P:N-acetylglucosamine catabolic process"/>
    <property type="evidence" value="ECO:0007669"/>
    <property type="project" value="TreeGrafter"/>
</dbReference>
<dbReference type="GO" id="GO:0019262">
    <property type="term" value="P:N-acetylneuraminate catabolic process"/>
    <property type="evidence" value="ECO:0007669"/>
    <property type="project" value="UniProtKB-UniRule"/>
</dbReference>
<dbReference type="CDD" id="cd01399">
    <property type="entry name" value="GlcN6P_deaminase"/>
    <property type="match status" value="1"/>
</dbReference>
<dbReference type="FunFam" id="3.40.50.1360:FF:000003">
    <property type="entry name" value="Glucosamine-6-phosphate deaminase"/>
    <property type="match status" value="1"/>
</dbReference>
<dbReference type="Gene3D" id="3.40.50.1360">
    <property type="match status" value="1"/>
</dbReference>
<dbReference type="HAMAP" id="MF_01241">
    <property type="entry name" value="GlcN6P_deamin"/>
    <property type="match status" value="1"/>
</dbReference>
<dbReference type="InterPro" id="IPR006148">
    <property type="entry name" value="Glc/Gal-6P_isomerase"/>
</dbReference>
<dbReference type="InterPro" id="IPR004547">
    <property type="entry name" value="Glucosamine6P_isomerase"/>
</dbReference>
<dbReference type="InterPro" id="IPR018321">
    <property type="entry name" value="Glucosamine6P_isomerase_CS"/>
</dbReference>
<dbReference type="InterPro" id="IPR037171">
    <property type="entry name" value="NagB/RpiA_transferase-like"/>
</dbReference>
<dbReference type="NCBIfam" id="TIGR00502">
    <property type="entry name" value="nagB"/>
    <property type="match status" value="1"/>
</dbReference>
<dbReference type="PANTHER" id="PTHR11280">
    <property type="entry name" value="GLUCOSAMINE-6-PHOSPHATE ISOMERASE"/>
    <property type="match status" value="1"/>
</dbReference>
<dbReference type="PANTHER" id="PTHR11280:SF5">
    <property type="entry name" value="GLUCOSAMINE-6-PHOSPHATE ISOMERASE"/>
    <property type="match status" value="1"/>
</dbReference>
<dbReference type="Pfam" id="PF01182">
    <property type="entry name" value="Glucosamine_iso"/>
    <property type="match status" value="1"/>
</dbReference>
<dbReference type="SUPFAM" id="SSF100950">
    <property type="entry name" value="NagB/RpiA/CoA transferase-like"/>
    <property type="match status" value="1"/>
</dbReference>
<dbReference type="PROSITE" id="PS01161">
    <property type="entry name" value="GLC_GALNAC_ISOMERASE"/>
    <property type="match status" value="1"/>
</dbReference>
<keyword id="KW-0119">Carbohydrate metabolism</keyword>
<keyword id="KW-0378">Hydrolase</keyword>
<reference key="1">
    <citation type="journal article" date="2001" name="Lancet">
        <title>Whole genome sequencing of meticillin-resistant Staphylococcus aureus.</title>
        <authorList>
            <person name="Kuroda M."/>
            <person name="Ohta T."/>
            <person name="Uchiyama I."/>
            <person name="Baba T."/>
            <person name="Yuzawa H."/>
            <person name="Kobayashi I."/>
            <person name="Cui L."/>
            <person name="Oguchi A."/>
            <person name="Aoki K."/>
            <person name="Nagai Y."/>
            <person name="Lian J.-Q."/>
            <person name="Ito T."/>
            <person name="Kanamori M."/>
            <person name="Matsumaru H."/>
            <person name="Maruyama A."/>
            <person name="Murakami H."/>
            <person name="Hosoyama A."/>
            <person name="Mizutani-Ui Y."/>
            <person name="Takahashi N.K."/>
            <person name="Sawano T."/>
            <person name="Inoue R."/>
            <person name="Kaito C."/>
            <person name="Sekimizu K."/>
            <person name="Hirakawa H."/>
            <person name="Kuhara S."/>
            <person name="Goto S."/>
            <person name="Yabuzaki J."/>
            <person name="Kanehisa M."/>
            <person name="Yamashita A."/>
            <person name="Oshima K."/>
            <person name="Furuya K."/>
            <person name="Yoshino C."/>
            <person name="Shiba T."/>
            <person name="Hattori M."/>
            <person name="Ogasawara N."/>
            <person name="Hayashi H."/>
            <person name="Hiramatsu K."/>
        </authorList>
    </citation>
    <scope>NUCLEOTIDE SEQUENCE [LARGE SCALE GENOMIC DNA]</scope>
    <source>
        <strain>N315</strain>
    </source>
</reference>
<reference key="2">
    <citation type="journal article" date="2005" name="J. Microbiol. Methods">
        <title>Correlation of proteomic and transcriptomic profiles of Staphylococcus aureus during the post-exponential phase of growth.</title>
        <authorList>
            <person name="Scherl A."/>
            <person name="Francois P."/>
            <person name="Bento M."/>
            <person name="Deshusses J.M."/>
            <person name="Charbonnier Y."/>
            <person name="Converset V."/>
            <person name="Huyghe A."/>
            <person name="Walter N."/>
            <person name="Hoogland C."/>
            <person name="Appel R.D."/>
            <person name="Sanchez J.-C."/>
            <person name="Zimmermann-Ivol C.G."/>
            <person name="Corthals G.L."/>
            <person name="Hochstrasser D.F."/>
            <person name="Schrenzel J."/>
        </authorList>
    </citation>
    <scope>IDENTIFICATION BY MASS SPECTROMETRY</scope>
    <source>
        <strain>N315</strain>
    </source>
</reference>
<reference key="3">
    <citation type="submission" date="2007-10" db="UniProtKB">
        <title>Shotgun proteomic analysis of total and membrane protein extracts of S. aureus strain N315.</title>
        <authorList>
            <person name="Vaezzadeh A.R."/>
            <person name="Deshusses J."/>
            <person name="Lescuyer P."/>
            <person name="Hochstrasser D.F."/>
        </authorList>
    </citation>
    <scope>IDENTIFICATION BY MASS SPECTROMETRY [LARGE SCALE ANALYSIS]</scope>
    <source>
        <strain>N315</strain>
    </source>
</reference>
<accession>P99125</accession>
<accession>Q99W40</accession>
<evidence type="ECO:0000255" key="1">
    <source>
        <dbReference type="HAMAP-Rule" id="MF_01241"/>
    </source>
</evidence>